<organism>
    <name type="scientific">Corynebacterium glutamicum (strain ATCC 13032 / DSM 20300 / JCM 1318 / BCRC 11384 / CCUG 27702 / LMG 3730 / NBRC 12168 / NCIMB 10025 / NRRL B-2784 / 534)</name>
    <dbReference type="NCBI Taxonomy" id="196627"/>
    <lineage>
        <taxon>Bacteria</taxon>
        <taxon>Bacillati</taxon>
        <taxon>Actinomycetota</taxon>
        <taxon>Actinomycetes</taxon>
        <taxon>Mycobacteriales</taxon>
        <taxon>Corynebacteriaceae</taxon>
        <taxon>Corynebacterium</taxon>
    </lineage>
</organism>
<name>PURT_CORGL</name>
<accession>Q8NM23</accession>
<accession>Q6M293</accession>
<feature type="chain" id="PRO_0000319152" description="Formate-dependent phosphoribosylglycinamide formyltransferase">
    <location>
        <begin position="1"/>
        <end position="408"/>
    </location>
</feature>
<feature type="domain" description="ATP-grasp" evidence="1">
    <location>
        <begin position="123"/>
        <end position="318"/>
    </location>
</feature>
<feature type="binding site" evidence="1">
    <location>
        <begin position="25"/>
        <end position="26"/>
    </location>
    <ligand>
        <name>N(1)-(5-phospho-beta-D-ribosyl)glycinamide</name>
        <dbReference type="ChEBI" id="CHEBI:143788"/>
    </ligand>
</feature>
<feature type="binding site" evidence="1">
    <location>
        <position position="85"/>
    </location>
    <ligand>
        <name>N(1)-(5-phospho-beta-D-ribosyl)glycinamide</name>
        <dbReference type="ChEBI" id="CHEBI:143788"/>
    </ligand>
</feature>
<feature type="binding site" evidence="1">
    <location>
        <position position="118"/>
    </location>
    <ligand>
        <name>ATP</name>
        <dbReference type="ChEBI" id="CHEBI:30616"/>
    </ligand>
</feature>
<feature type="binding site" evidence="1">
    <location>
        <position position="159"/>
    </location>
    <ligand>
        <name>ATP</name>
        <dbReference type="ChEBI" id="CHEBI:30616"/>
    </ligand>
</feature>
<feature type="binding site" evidence="1">
    <location>
        <begin position="164"/>
        <end position="169"/>
    </location>
    <ligand>
        <name>ATP</name>
        <dbReference type="ChEBI" id="CHEBI:30616"/>
    </ligand>
</feature>
<feature type="binding site" evidence="1">
    <location>
        <begin position="199"/>
        <end position="202"/>
    </location>
    <ligand>
        <name>ATP</name>
        <dbReference type="ChEBI" id="CHEBI:30616"/>
    </ligand>
</feature>
<feature type="binding site" evidence="1">
    <location>
        <position position="207"/>
    </location>
    <ligand>
        <name>ATP</name>
        <dbReference type="ChEBI" id="CHEBI:30616"/>
    </ligand>
</feature>
<feature type="binding site" evidence="1">
    <location>
        <position position="277"/>
    </location>
    <ligand>
        <name>Mg(2+)</name>
        <dbReference type="ChEBI" id="CHEBI:18420"/>
    </ligand>
</feature>
<feature type="binding site" evidence="1">
    <location>
        <position position="289"/>
    </location>
    <ligand>
        <name>Mg(2+)</name>
        <dbReference type="ChEBI" id="CHEBI:18420"/>
    </ligand>
</feature>
<feature type="binding site" evidence="1">
    <location>
        <position position="296"/>
    </location>
    <ligand>
        <name>N(1)-(5-phospho-beta-D-ribosyl)glycinamide</name>
        <dbReference type="ChEBI" id="CHEBI:143788"/>
    </ligand>
</feature>
<feature type="binding site" evidence="1">
    <location>
        <position position="365"/>
    </location>
    <ligand>
        <name>N(1)-(5-phospho-beta-D-ribosyl)glycinamide</name>
        <dbReference type="ChEBI" id="CHEBI:143788"/>
    </ligand>
</feature>
<feature type="binding site" evidence="1">
    <location>
        <begin position="372"/>
        <end position="373"/>
    </location>
    <ligand>
        <name>N(1)-(5-phospho-beta-D-ribosyl)glycinamide</name>
        <dbReference type="ChEBI" id="CHEBI:143788"/>
    </ligand>
</feature>
<dbReference type="EC" id="6.3.1.21" evidence="1"/>
<dbReference type="EMBL" id="BA000036">
    <property type="protein sequence ID" value="BAC00153.1"/>
    <property type="status" value="ALT_INIT"/>
    <property type="molecule type" value="Genomic_DNA"/>
</dbReference>
<dbReference type="EMBL" id="BX927156">
    <property type="protein sequence ID" value="CAF20781.1"/>
    <property type="status" value="ALT_INIT"/>
    <property type="molecule type" value="Genomic_DNA"/>
</dbReference>
<dbReference type="RefSeq" id="NP_601954.1">
    <property type="nucleotide sequence ID" value="NC_003450.3"/>
</dbReference>
<dbReference type="RefSeq" id="WP_003853648.1">
    <property type="nucleotide sequence ID" value="NC_006958.1"/>
</dbReference>
<dbReference type="SMR" id="Q8NM23"/>
<dbReference type="STRING" id="196627.cg3054"/>
<dbReference type="GeneID" id="1020704"/>
<dbReference type="KEGG" id="cgb:cg3054"/>
<dbReference type="KEGG" id="cgl:Cgl2759"/>
<dbReference type="PATRIC" id="fig|196627.13.peg.2690"/>
<dbReference type="eggNOG" id="COG0027">
    <property type="taxonomic scope" value="Bacteria"/>
</dbReference>
<dbReference type="HOGENOM" id="CLU_011534_1_3_11"/>
<dbReference type="OrthoDB" id="9804625at2"/>
<dbReference type="BioCyc" id="CORYNE:G18NG-12376-MONOMER"/>
<dbReference type="UniPathway" id="UPA00074">
    <property type="reaction ID" value="UER00127"/>
</dbReference>
<dbReference type="Proteomes" id="UP000000582">
    <property type="component" value="Chromosome"/>
</dbReference>
<dbReference type="Proteomes" id="UP000001009">
    <property type="component" value="Chromosome"/>
</dbReference>
<dbReference type="GO" id="GO:0005829">
    <property type="term" value="C:cytosol"/>
    <property type="evidence" value="ECO:0007669"/>
    <property type="project" value="TreeGrafter"/>
</dbReference>
<dbReference type="GO" id="GO:0005524">
    <property type="term" value="F:ATP binding"/>
    <property type="evidence" value="ECO:0007669"/>
    <property type="project" value="UniProtKB-UniRule"/>
</dbReference>
<dbReference type="GO" id="GO:0000287">
    <property type="term" value="F:magnesium ion binding"/>
    <property type="evidence" value="ECO:0007669"/>
    <property type="project" value="InterPro"/>
</dbReference>
<dbReference type="GO" id="GO:0043815">
    <property type="term" value="F:phosphoribosylglycinamide formyltransferase 2 activity"/>
    <property type="evidence" value="ECO:0007669"/>
    <property type="project" value="UniProtKB-UniRule"/>
</dbReference>
<dbReference type="GO" id="GO:0004644">
    <property type="term" value="F:phosphoribosylglycinamide formyltransferase activity"/>
    <property type="evidence" value="ECO:0007669"/>
    <property type="project" value="InterPro"/>
</dbReference>
<dbReference type="GO" id="GO:0006189">
    <property type="term" value="P:'de novo' IMP biosynthetic process"/>
    <property type="evidence" value="ECO:0007669"/>
    <property type="project" value="UniProtKB-UniRule"/>
</dbReference>
<dbReference type="FunFam" id="3.30.1490.20:FF:000013">
    <property type="entry name" value="Formate-dependent phosphoribosylglycinamide formyltransferase"/>
    <property type="match status" value="1"/>
</dbReference>
<dbReference type="Gene3D" id="3.40.50.20">
    <property type="match status" value="1"/>
</dbReference>
<dbReference type="Gene3D" id="3.30.1490.20">
    <property type="entry name" value="ATP-grasp fold, A domain"/>
    <property type="match status" value="1"/>
</dbReference>
<dbReference type="Gene3D" id="3.30.470.20">
    <property type="entry name" value="ATP-grasp fold, B domain"/>
    <property type="match status" value="1"/>
</dbReference>
<dbReference type="HAMAP" id="MF_01643">
    <property type="entry name" value="PurT"/>
    <property type="match status" value="1"/>
</dbReference>
<dbReference type="InterPro" id="IPR011761">
    <property type="entry name" value="ATP-grasp"/>
</dbReference>
<dbReference type="InterPro" id="IPR003135">
    <property type="entry name" value="ATP-grasp_carboxylate-amine"/>
</dbReference>
<dbReference type="InterPro" id="IPR013815">
    <property type="entry name" value="ATP_grasp_subdomain_1"/>
</dbReference>
<dbReference type="InterPro" id="IPR016185">
    <property type="entry name" value="PreATP-grasp_dom_sf"/>
</dbReference>
<dbReference type="InterPro" id="IPR005862">
    <property type="entry name" value="PurT"/>
</dbReference>
<dbReference type="InterPro" id="IPR054350">
    <property type="entry name" value="PurT/PurK_preATP-grasp"/>
</dbReference>
<dbReference type="InterPro" id="IPR048740">
    <property type="entry name" value="PurT_C"/>
</dbReference>
<dbReference type="InterPro" id="IPR011054">
    <property type="entry name" value="Rudment_hybrid_motif"/>
</dbReference>
<dbReference type="NCBIfam" id="NF006766">
    <property type="entry name" value="PRK09288.1"/>
    <property type="match status" value="1"/>
</dbReference>
<dbReference type="NCBIfam" id="TIGR01142">
    <property type="entry name" value="purT"/>
    <property type="match status" value="1"/>
</dbReference>
<dbReference type="PANTHER" id="PTHR43055">
    <property type="entry name" value="FORMATE-DEPENDENT PHOSPHORIBOSYLGLYCINAMIDE FORMYLTRANSFERASE"/>
    <property type="match status" value="1"/>
</dbReference>
<dbReference type="PANTHER" id="PTHR43055:SF1">
    <property type="entry name" value="FORMATE-DEPENDENT PHOSPHORIBOSYLGLYCINAMIDE FORMYLTRANSFERASE"/>
    <property type="match status" value="1"/>
</dbReference>
<dbReference type="Pfam" id="PF02222">
    <property type="entry name" value="ATP-grasp"/>
    <property type="match status" value="1"/>
</dbReference>
<dbReference type="Pfam" id="PF21244">
    <property type="entry name" value="PurT_C"/>
    <property type="match status" value="1"/>
</dbReference>
<dbReference type="Pfam" id="PF22660">
    <property type="entry name" value="RS_preATP-grasp-like"/>
    <property type="match status" value="1"/>
</dbReference>
<dbReference type="SUPFAM" id="SSF56059">
    <property type="entry name" value="Glutathione synthetase ATP-binding domain-like"/>
    <property type="match status" value="1"/>
</dbReference>
<dbReference type="SUPFAM" id="SSF52440">
    <property type="entry name" value="PreATP-grasp domain"/>
    <property type="match status" value="1"/>
</dbReference>
<dbReference type="SUPFAM" id="SSF51246">
    <property type="entry name" value="Rudiment single hybrid motif"/>
    <property type="match status" value="1"/>
</dbReference>
<dbReference type="PROSITE" id="PS50975">
    <property type="entry name" value="ATP_GRASP"/>
    <property type="match status" value="1"/>
</dbReference>
<keyword id="KW-0067">ATP-binding</keyword>
<keyword id="KW-0436">Ligase</keyword>
<keyword id="KW-0460">Magnesium</keyword>
<keyword id="KW-0479">Metal-binding</keyword>
<keyword id="KW-0547">Nucleotide-binding</keyword>
<keyword id="KW-0658">Purine biosynthesis</keyword>
<keyword id="KW-1185">Reference proteome</keyword>
<protein>
    <recommendedName>
        <fullName evidence="1">Formate-dependent phosphoribosylglycinamide formyltransferase</fullName>
        <ecNumber evidence="1">6.3.1.21</ecNumber>
    </recommendedName>
    <alternativeName>
        <fullName evidence="1">5'-phosphoribosylglycinamide transformylase 2</fullName>
    </alternativeName>
    <alternativeName>
        <fullName evidence="1">Formate-dependent GAR transformylase</fullName>
    </alternativeName>
    <alternativeName>
        <fullName evidence="1">GAR transformylase 2</fullName>
        <shortName evidence="1">GART 2</shortName>
    </alternativeName>
    <alternativeName>
        <fullName evidence="1">Non-folate glycinamide ribonucleotide transformylase</fullName>
    </alternativeName>
    <alternativeName>
        <fullName evidence="1">Phosphoribosylglycinamide formyltransferase 2</fullName>
    </alternativeName>
</protein>
<sequence>MYIPESIGTPLTPNATKVMLLGSGELGKEVAIAFQRLGLEVHAVDRYEHAPAHQVAHFSYVIDMTDAAQVRELVERVRPDFVIPEIEALATDELVKIEEEGLATIVPTARAAKLTMNREGIRKLAAEELGLPTSNYEFCSTFEEFSAAAEKLGYPNVVKPVMSSSGKGQSVLRSSDDLQAAWDYAMSGARVANSRVIVEAFVEFDYEITLLTVRSIDPTTSKPATWFCEPIGHRQEDGDYVESWQPMEMTPRALENARSVAARITNALGGRGVFGVELFVSGDDVYFSEVSPRPHDTGLVTLATQRFSEFELHAKAILGLPVDVTLISPGASAVIYGGIESEGVSYTGLAEALAVAETDLRIFAKPEAFTKRRMGVAVSTAEDVAAARDRATLAAAAIKVHPGNSAEA</sequence>
<proteinExistence type="inferred from homology"/>
<evidence type="ECO:0000255" key="1">
    <source>
        <dbReference type="HAMAP-Rule" id="MF_01643"/>
    </source>
</evidence>
<evidence type="ECO:0000305" key="2"/>
<reference key="1">
    <citation type="journal article" date="2003" name="Appl. Microbiol. Biotechnol.">
        <title>The Corynebacterium glutamicum genome: features and impacts on biotechnological processes.</title>
        <authorList>
            <person name="Ikeda M."/>
            <person name="Nakagawa S."/>
        </authorList>
    </citation>
    <scope>NUCLEOTIDE SEQUENCE [LARGE SCALE GENOMIC DNA]</scope>
    <source>
        <strain>ATCC 13032 / DSM 20300 / JCM 1318 / BCRC 11384 / CCUG 27702 / LMG 3730 / NBRC 12168 / NCIMB 10025 / NRRL B-2784 / 534</strain>
    </source>
</reference>
<reference key="2">
    <citation type="journal article" date="2003" name="J. Biotechnol.">
        <title>The complete Corynebacterium glutamicum ATCC 13032 genome sequence and its impact on the production of L-aspartate-derived amino acids and vitamins.</title>
        <authorList>
            <person name="Kalinowski J."/>
            <person name="Bathe B."/>
            <person name="Bartels D."/>
            <person name="Bischoff N."/>
            <person name="Bott M."/>
            <person name="Burkovski A."/>
            <person name="Dusch N."/>
            <person name="Eggeling L."/>
            <person name="Eikmanns B.J."/>
            <person name="Gaigalat L."/>
            <person name="Goesmann A."/>
            <person name="Hartmann M."/>
            <person name="Huthmacher K."/>
            <person name="Kraemer R."/>
            <person name="Linke B."/>
            <person name="McHardy A.C."/>
            <person name="Meyer F."/>
            <person name="Moeckel B."/>
            <person name="Pfefferle W."/>
            <person name="Puehler A."/>
            <person name="Rey D.A."/>
            <person name="Rueckert C."/>
            <person name="Rupp O."/>
            <person name="Sahm H."/>
            <person name="Wendisch V.F."/>
            <person name="Wiegraebe I."/>
            <person name="Tauch A."/>
        </authorList>
    </citation>
    <scope>NUCLEOTIDE SEQUENCE [LARGE SCALE GENOMIC DNA]</scope>
    <source>
        <strain>ATCC 13032 / DSM 20300 / JCM 1318 / BCRC 11384 / CCUG 27702 / LMG 3730 / NBRC 12168 / NCIMB 10025 / NRRL B-2784 / 534</strain>
    </source>
</reference>
<gene>
    <name evidence="1" type="primary">purT</name>
    <name type="ordered locus">Cgl2759</name>
    <name type="ordered locus">cg3054</name>
</gene>
<comment type="function">
    <text evidence="1">Involved in the de novo purine biosynthesis. Catalyzes the transfer of formate to 5-phospho-ribosyl-glycinamide (GAR), producing 5-phospho-ribosyl-N-formylglycinamide (FGAR). Formate is provided by PurU via hydrolysis of 10-formyl-tetrahydrofolate.</text>
</comment>
<comment type="catalytic activity">
    <reaction evidence="1">
        <text>N(1)-(5-phospho-beta-D-ribosyl)glycinamide + formate + ATP = N(2)-formyl-N(1)-(5-phospho-beta-D-ribosyl)glycinamide + ADP + phosphate + H(+)</text>
        <dbReference type="Rhea" id="RHEA:24829"/>
        <dbReference type="ChEBI" id="CHEBI:15378"/>
        <dbReference type="ChEBI" id="CHEBI:15740"/>
        <dbReference type="ChEBI" id="CHEBI:30616"/>
        <dbReference type="ChEBI" id="CHEBI:43474"/>
        <dbReference type="ChEBI" id="CHEBI:143788"/>
        <dbReference type="ChEBI" id="CHEBI:147286"/>
        <dbReference type="ChEBI" id="CHEBI:456216"/>
        <dbReference type="EC" id="6.3.1.21"/>
    </reaction>
    <physiologicalReaction direction="left-to-right" evidence="1">
        <dbReference type="Rhea" id="RHEA:24830"/>
    </physiologicalReaction>
</comment>
<comment type="pathway">
    <text evidence="1">Purine metabolism; IMP biosynthesis via de novo pathway; N(2)-formyl-N(1)-(5-phospho-D-ribosyl)glycinamide from N(1)-(5-phospho-D-ribosyl)glycinamide (formate route): step 1/1.</text>
</comment>
<comment type="subunit">
    <text evidence="1">Homodimer.</text>
</comment>
<comment type="similarity">
    <text evidence="1">Belongs to the PurK/PurT family.</text>
</comment>
<comment type="sequence caution" evidence="2">
    <conflict type="erroneous initiation">
        <sequence resource="EMBL-CDS" id="BAC00153"/>
    </conflict>
</comment>
<comment type="sequence caution" evidence="2">
    <conflict type="erroneous initiation">
        <sequence resource="EMBL-CDS" id="CAF20781"/>
    </conflict>
</comment>